<proteinExistence type="inferred from homology"/>
<name>CYB_MYOLU</name>
<accession>Q957A8</accession>
<organism>
    <name type="scientific">Myotis lucifugus</name>
    <name type="common">Little brown bat</name>
    <dbReference type="NCBI Taxonomy" id="59463"/>
    <lineage>
        <taxon>Eukaryota</taxon>
        <taxon>Metazoa</taxon>
        <taxon>Chordata</taxon>
        <taxon>Craniata</taxon>
        <taxon>Vertebrata</taxon>
        <taxon>Euteleostomi</taxon>
        <taxon>Mammalia</taxon>
        <taxon>Eutheria</taxon>
        <taxon>Laurasiatheria</taxon>
        <taxon>Chiroptera</taxon>
        <taxon>Yangochiroptera</taxon>
        <taxon>Vespertilionidae</taxon>
        <taxon>Myotis</taxon>
    </lineage>
</organism>
<comment type="function">
    <text evidence="2">Component of the ubiquinol-cytochrome c reductase complex (complex III or cytochrome b-c1 complex) that is part of the mitochondrial respiratory chain. The b-c1 complex mediates electron transfer from ubiquinol to cytochrome c. Contributes to the generation of a proton gradient across the mitochondrial membrane that is then used for ATP synthesis.</text>
</comment>
<comment type="cofactor">
    <cofactor evidence="2">
        <name>heme b</name>
        <dbReference type="ChEBI" id="CHEBI:60344"/>
    </cofactor>
    <text evidence="2">Binds 2 heme b groups non-covalently.</text>
</comment>
<comment type="subunit">
    <text evidence="2">The cytochrome bc1 complex contains 11 subunits: 3 respiratory subunits (MT-CYB, CYC1 and UQCRFS1), 2 core proteins (UQCRC1 and UQCRC2) and 6 low-molecular weight proteins (UQCRH/QCR6, UQCRB/QCR7, UQCRQ/QCR8, UQCR10/QCR9, UQCR11/QCR10 and a cleavage product of UQCRFS1). This cytochrome bc1 complex then forms a dimer.</text>
</comment>
<comment type="subcellular location">
    <subcellularLocation>
        <location evidence="2">Mitochondrion inner membrane</location>
        <topology evidence="2">Multi-pass membrane protein</topology>
    </subcellularLocation>
</comment>
<comment type="miscellaneous">
    <text evidence="1">Heme 1 (or BL or b562) is low-potential and absorbs at about 562 nm, and heme 2 (or BH or b566) is high-potential and absorbs at about 566 nm.</text>
</comment>
<comment type="similarity">
    <text evidence="3 4">Belongs to the cytochrome b family.</text>
</comment>
<comment type="caution">
    <text evidence="2">The full-length protein contains only eight transmembrane helices, not nine as predicted by bioinformatics tools.</text>
</comment>
<reference key="1">
    <citation type="journal article" date="2001" name="Mol. Phylogenet. Evol.">
        <title>Molecular systematics of bats of the genus Myotis (Vespertilionidae) suggests deterministic ecomorphological convergences.</title>
        <authorList>
            <person name="Ruedi M."/>
            <person name="Mayer F."/>
        </authorList>
    </citation>
    <scope>NUCLEOTIDE SEQUENCE [GENOMIC DNA]</scope>
    <source>
        <strain>Isolate UAM 22927</strain>
    </source>
</reference>
<geneLocation type="mitochondrion"/>
<keyword id="KW-0249">Electron transport</keyword>
<keyword id="KW-0349">Heme</keyword>
<keyword id="KW-0408">Iron</keyword>
<keyword id="KW-0472">Membrane</keyword>
<keyword id="KW-0479">Metal-binding</keyword>
<keyword id="KW-0496">Mitochondrion</keyword>
<keyword id="KW-0999">Mitochondrion inner membrane</keyword>
<keyword id="KW-1185">Reference proteome</keyword>
<keyword id="KW-0679">Respiratory chain</keyword>
<keyword id="KW-0812">Transmembrane</keyword>
<keyword id="KW-1133">Transmembrane helix</keyword>
<keyword id="KW-0813">Transport</keyword>
<keyword id="KW-0830">Ubiquinone</keyword>
<sequence>MTNIRKSHPLMKIINSSFIDLPAPSNISSWWNFGSLLGICLALQILTGLFLAMHYTSDTATAFNSVTHICRDVNYGWVLRYMHANGASMFFICLYLHVGRGLYYGSYMYTETWNIGVILLFAVMATAFMGYVLPWGQMSFWGATVITNLLSAIPYIGTDLVEWIWGGFSVDKATLTRFFAFHFLLPFIIAAMVMVHLLFLHETGSNNPTGIPSNADMIPFHPYYTIKDILGLLLMITALLMLVLFSPDMLGDPDNYTPANPLNTPPHIKPEWYFLFAYAILRSIPNKLGGVLALVLSILILIIVPLLHTSKQRSMTFRPLSQCLFWLLAADLFTLTWIGGQPVEHPYVIIGQLASILYLSIIILLMPLTSLMENHLLKW</sequence>
<protein>
    <recommendedName>
        <fullName>Cytochrome b</fullName>
    </recommendedName>
    <alternativeName>
        <fullName>Complex III subunit 3</fullName>
    </alternativeName>
    <alternativeName>
        <fullName>Complex III subunit III</fullName>
    </alternativeName>
    <alternativeName>
        <fullName>Cytochrome b-c1 complex subunit 3</fullName>
    </alternativeName>
    <alternativeName>
        <fullName>Ubiquinol-cytochrome-c reductase complex cytochrome b subunit</fullName>
    </alternativeName>
</protein>
<dbReference type="EMBL" id="AF376854">
    <property type="protein sequence ID" value="AAK57673.1"/>
    <property type="molecule type" value="Genomic_DNA"/>
</dbReference>
<dbReference type="SMR" id="Q957A8"/>
<dbReference type="FunCoup" id="Q957A8">
    <property type="interactions" value="175"/>
</dbReference>
<dbReference type="InParanoid" id="Q957A8"/>
<dbReference type="Proteomes" id="UP000001074">
    <property type="component" value="Unassembled WGS sequence"/>
</dbReference>
<dbReference type="GO" id="GO:0005743">
    <property type="term" value="C:mitochondrial inner membrane"/>
    <property type="evidence" value="ECO:0007669"/>
    <property type="project" value="UniProtKB-SubCell"/>
</dbReference>
<dbReference type="GO" id="GO:0045275">
    <property type="term" value="C:respiratory chain complex III"/>
    <property type="evidence" value="ECO:0007669"/>
    <property type="project" value="InterPro"/>
</dbReference>
<dbReference type="GO" id="GO:0046872">
    <property type="term" value="F:metal ion binding"/>
    <property type="evidence" value="ECO:0007669"/>
    <property type="project" value="UniProtKB-KW"/>
</dbReference>
<dbReference type="GO" id="GO:0008121">
    <property type="term" value="F:ubiquinol-cytochrome-c reductase activity"/>
    <property type="evidence" value="ECO:0007669"/>
    <property type="project" value="InterPro"/>
</dbReference>
<dbReference type="GO" id="GO:0006122">
    <property type="term" value="P:mitochondrial electron transport, ubiquinol to cytochrome c"/>
    <property type="evidence" value="ECO:0007669"/>
    <property type="project" value="TreeGrafter"/>
</dbReference>
<dbReference type="CDD" id="cd00290">
    <property type="entry name" value="cytochrome_b_C"/>
    <property type="match status" value="1"/>
</dbReference>
<dbReference type="CDD" id="cd00284">
    <property type="entry name" value="Cytochrome_b_N"/>
    <property type="match status" value="1"/>
</dbReference>
<dbReference type="FunFam" id="1.20.810.10:FF:000002">
    <property type="entry name" value="Cytochrome b"/>
    <property type="match status" value="1"/>
</dbReference>
<dbReference type="Gene3D" id="1.20.810.10">
    <property type="entry name" value="Cytochrome Bc1 Complex, Chain C"/>
    <property type="match status" value="1"/>
</dbReference>
<dbReference type="InterPro" id="IPR005798">
    <property type="entry name" value="Cyt_b/b6_C"/>
</dbReference>
<dbReference type="InterPro" id="IPR036150">
    <property type="entry name" value="Cyt_b/b6_C_sf"/>
</dbReference>
<dbReference type="InterPro" id="IPR005797">
    <property type="entry name" value="Cyt_b/b6_N"/>
</dbReference>
<dbReference type="InterPro" id="IPR027387">
    <property type="entry name" value="Cytb/b6-like_sf"/>
</dbReference>
<dbReference type="InterPro" id="IPR030689">
    <property type="entry name" value="Cytochrome_b"/>
</dbReference>
<dbReference type="InterPro" id="IPR048260">
    <property type="entry name" value="Cytochrome_b_C_euk/bac"/>
</dbReference>
<dbReference type="InterPro" id="IPR048259">
    <property type="entry name" value="Cytochrome_b_N_euk/bac"/>
</dbReference>
<dbReference type="InterPro" id="IPR016174">
    <property type="entry name" value="Di-haem_cyt_TM"/>
</dbReference>
<dbReference type="PANTHER" id="PTHR19271">
    <property type="entry name" value="CYTOCHROME B"/>
    <property type="match status" value="1"/>
</dbReference>
<dbReference type="PANTHER" id="PTHR19271:SF16">
    <property type="entry name" value="CYTOCHROME B"/>
    <property type="match status" value="1"/>
</dbReference>
<dbReference type="Pfam" id="PF00032">
    <property type="entry name" value="Cytochrom_B_C"/>
    <property type="match status" value="1"/>
</dbReference>
<dbReference type="Pfam" id="PF00033">
    <property type="entry name" value="Cytochrome_B"/>
    <property type="match status" value="1"/>
</dbReference>
<dbReference type="PIRSF" id="PIRSF038885">
    <property type="entry name" value="COB"/>
    <property type="match status" value="1"/>
</dbReference>
<dbReference type="SUPFAM" id="SSF81648">
    <property type="entry name" value="a domain/subunit of cytochrome bc1 complex (Ubiquinol-cytochrome c reductase)"/>
    <property type="match status" value="1"/>
</dbReference>
<dbReference type="SUPFAM" id="SSF81342">
    <property type="entry name" value="Transmembrane di-heme cytochromes"/>
    <property type="match status" value="1"/>
</dbReference>
<dbReference type="PROSITE" id="PS51003">
    <property type="entry name" value="CYTB_CTER"/>
    <property type="match status" value="1"/>
</dbReference>
<dbReference type="PROSITE" id="PS51002">
    <property type="entry name" value="CYTB_NTER"/>
    <property type="match status" value="1"/>
</dbReference>
<feature type="chain" id="PRO_0000254829" description="Cytochrome b">
    <location>
        <begin position="1"/>
        <end position="379"/>
    </location>
</feature>
<feature type="transmembrane region" description="Helical" evidence="2">
    <location>
        <begin position="33"/>
        <end position="53"/>
    </location>
</feature>
<feature type="transmembrane region" description="Helical" evidence="2">
    <location>
        <begin position="77"/>
        <end position="98"/>
    </location>
</feature>
<feature type="transmembrane region" description="Helical" evidence="2">
    <location>
        <begin position="113"/>
        <end position="133"/>
    </location>
</feature>
<feature type="transmembrane region" description="Helical" evidence="2">
    <location>
        <begin position="178"/>
        <end position="198"/>
    </location>
</feature>
<feature type="transmembrane region" description="Helical" evidence="2">
    <location>
        <begin position="226"/>
        <end position="246"/>
    </location>
</feature>
<feature type="transmembrane region" description="Helical" evidence="2">
    <location>
        <begin position="288"/>
        <end position="308"/>
    </location>
</feature>
<feature type="transmembrane region" description="Helical" evidence="2">
    <location>
        <begin position="320"/>
        <end position="340"/>
    </location>
</feature>
<feature type="transmembrane region" description="Helical" evidence="2">
    <location>
        <begin position="347"/>
        <end position="367"/>
    </location>
</feature>
<feature type="binding site" description="axial binding residue" evidence="2">
    <location>
        <position position="83"/>
    </location>
    <ligand>
        <name>heme b</name>
        <dbReference type="ChEBI" id="CHEBI:60344"/>
        <label>b562</label>
    </ligand>
    <ligandPart>
        <name>Fe</name>
        <dbReference type="ChEBI" id="CHEBI:18248"/>
    </ligandPart>
</feature>
<feature type="binding site" description="axial binding residue" evidence="2">
    <location>
        <position position="97"/>
    </location>
    <ligand>
        <name>heme b</name>
        <dbReference type="ChEBI" id="CHEBI:60344"/>
        <label>b566</label>
    </ligand>
    <ligandPart>
        <name>Fe</name>
        <dbReference type="ChEBI" id="CHEBI:18248"/>
    </ligandPart>
</feature>
<feature type="binding site" description="axial binding residue" evidence="2">
    <location>
        <position position="182"/>
    </location>
    <ligand>
        <name>heme b</name>
        <dbReference type="ChEBI" id="CHEBI:60344"/>
        <label>b562</label>
    </ligand>
    <ligandPart>
        <name>Fe</name>
        <dbReference type="ChEBI" id="CHEBI:18248"/>
    </ligandPart>
</feature>
<feature type="binding site" description="axial binding residue" evidence="2">
    <location>
        <position position="196"/>
    </location>
    <ligand>
        <name>heme b</name>
        <dbReference type="ChEBI" id="CHEBI:60344"/>
        <label>b566</label>
    </ligand>
    <ligandPart>
        <name>Fe</name>
        <dbReference type="ChEBI" id="CHEBI:18248"/>
    </ligandPart>
</feature>
<feature type="binding site" evidence="2">
    <location>
        <position position="201"/>
    </location>
    <ligand>
        <name>a ubiquinone</name>
        <dbReference type="ChEBI" id="CHEBI:16389"/>
    </ligand>
</feature>
<gene>
    <name type="primary">MT-CYB</name>
    <name type="synonym">COB</name>
    <name type="synonym">CYTB</name>
    <name type="synonym">MTCYB</name>
</gene>
<evidence type="ECO:0000250" key="1"/>
<evidence type="ECO:0000250" key="2">
    <source>
        <dbReference type="UniProtKB" id="P00157"/>
    </source>
</evidence>
<evidence type="ECO:0000255" key="3">
    <source>
        <dbReference type="PROSITE-ProRule" id="PRU00967"/>
    </source>
</evidence>
<evidence type="ECO:0000255" key="4">
    <source>
        <dbReference type="PROSITE-ProRule" id="PRU00968"/>
    </source>
</evidence>